<accession>P82305</accession>
<proteinExistence type="evidence at protein level"/>
<sequence length="21" mass="2419">DGPAQKQNTVNQLLVLIYLYK</sequence>
<feature type="chain" id="PRO_0000204285" description="Hemocyanin subunit 4">
    <location>
        <begin position="1"/>
        <end position="21" status="greater than"/>
    </location>
</feature>
<feature type="non-terminal residue" evidence="1">
    <location>
        <position position="21"/>
    </location>
</feature>
<reference evidence="1" key="1">
    <citation type="journal article" date="1999" name="Comp. Biochem. Physiol.">
        <title>Subunit composition and N-terminal analysis of arthropod hemocyanins.</title>
        <authorList>
            <person name="Stoeva S."/>
            <person name="Dolashka P."/>
            <person name="Hristova R."/>
            <person name="Genov N."/>
            <person name="Voelter W."/>
        </authorList>
    </citation>
    <scope>PROTEIN SEQUENCE</scope>
</reference>
<dbReference type="GO" id="GO:0005576">
    <property type="term" value="C:extracellular region"/>
    <property type="evidence" value="ECO:0007669"/>
    <property type="project" value="UniProtKB-SubCell"/>
</dbReference>
<dbReference type="GO" id="GO:0005344">
    <property type="term" value="F:oxygen carrier activity"/>
    <property type="evidence" value="ECO:0007669"/>
    <property type="project" value="UniProtKB-KW"/>
</dbReference>
<evidence type="ECO:0000305" key="1"/>
<keyword id="KW-0186">Copper</keyword>
<keyword id="KW-0903">Direct protein sequencing</keyword>
<keyword id="KW-0561">Oxygen transport</keyword>
<keyword id="KW-0964">Secreted</keyword>
<keyword id="KW-0813">Transport</keyword>
<name>HCY4_MAJSQ</name>
<comment type="function">
    <text>Hemocyanins are copper-containing oxygen carriers occurring freely dissolved in the hemolymph of many mollusks and arthropods.</text>
</comment>
<comment type="subcellular location">
    <subcellularLocation>
        <location>Secreted</location>
        <location>Extracellular space</location>
    </subcellularLocation>
</comment>
<comment type="tissue specificity">
    <text>Hemolymph.</text>
</comment>
<comment type="similarity">
    <text evidence="1">Belongs to the tyrosinase family. Hemocyanin subfamily.</text>
</comment>
<organism evidence="1">
    <name type="scientific">Maja squinado</name>
    <name type="common">Mediterranean spider crab</name>
    <name type="synonym">Cancer squinado</name>
    <dbReference type="NCBI Taxonomy" id="99391"/>
    <lineage>
        <taxon>Eukaryota</taxon>
        <taxon>Metazoa</taxon>
        <taxon>Ecdysozoa</taxon>
        <taxon>Arthropoda</taxon>
        <taxon>Crustacea</taxon>
        <taxon>Multicrustacea</taxon>
        <taxon>Malacostraca</taxon>
        <taxon>Eumalacostraca</taxon>
        <taxon>Eucarida</taxon>
        <taxon>Decapoda</taxon>
        <taxon>Pleocyemata</taxon>
        <taxon>Brachyura</taxon>
        <taxon>Eubrachyura</taxon>
        <taxon>Majoidea</taxon>
        <taxon>Majidae</taxon>
        <taxon>Maja</taxon>
    </lineage>
</organism>
<protein>
    <recommendedName>
        <fullName>Hemocyanin subunit 4</fullName>
    </recommendedName>
</protein>